<accession>Q6VRB0</accession>
<accession>Q3KQC7</accession>
<accession>Q6IP49</accession>
<protein>
    <recommendedName>
        <fullName evidence="8">Protein arginine N-methyltransferase 1-B</fullName>
        <shortName evidence="8">xPRMT1b</shortName>
        <ecNumber evidence="7">2.1.1.319</ecNumber>
    </recommendedName>
    <alternativeName>
        <fullName evidence="12">Arginine methyltransferase 1b</fullName>
    </alternativeName>
    <alternativeName>
        <fullName>Histone-arginine N-methyltransferase PRMT1-B</fullName>
    </alternativeName>
</protein>
<feature type="chain" id="PRO_0000391366" description="Protein arginine N-methyltransferase 1-B">
    <location>
        <begin position="1"/>
        <end position="351"/>
    </location>
</feature>
<feature type="domain" description="SAM-dependent MTase PRMT-type" evidence="5">
    <location>
        <begin position="30"/>
        <end position="331"/>
    </location>
</feature>
<feature type="active site" evidence="1">
    <location>
        <position position="142"/>
    </location>
</feature>
<feature type="active site" evidence="1">
    <location>
        <position position="151"/>
    </location>
</feature>
<feature type="binding site" evidence="1">
    <location>
        <position position="43"/>
    </location>
    <ligand>
        <name>S-adenosyl-L-methionine</name>
        <dbReference type="ChEBI" id="CHEBI:59789"/>
    </ligand>
</feature>
<feature type="binding site" evidence="1">
    <location>
        <position position="52"/>
    </location>
    <ligand>
        <name>S-adenosyl-L-methionine</name>
        <dbReference type="ChEBI" id="CHEBI:59789"/>
    </ligand>
</feature>
<feature type="binding site" evidence="1">
    <location>
        <position position="76"/>
    </location>
    <ligand>
        <name>S-adenosyl-L-methionine</name>
        <dbReference type="ChEBI" id="CHEBI:59789"/>
    </ligand>
</feature>
<feature type="binding site" evidence="1">
    <location>
        <position position="98"/>
    </location>
    <ligand>
        <name>S-adenosyl-L-methionine</name>
        <dbReference type="ChEBI" id="CHEBI:59789"/>
    </ligand>
</feature>
<feature type="binding site" evidence="1">
    <location>
        <position position="127"/>
    </location>
    <ligand>
        <name>S-adenosyl-L-methionine</name>
        <dbReference type="ChEBI" id="CHEBI:59789"/>
    </ligand>
</feature>
<feature type="sequence conflict" description="In Ref. 2; AAI06276." evidence="9" ref="2">
    <original>A</original>
    <variation>P</variation>
    <location>
        <position position="14"/>
    </location>
</feature>
<comment type="function">
    <text evidence="3 6 7">Arginine methyltransferase that methylates (mono and asymmetric dimethylation) the guanidino nitrogens of arginyl residues present in target proteins. Constitutes the main enzyme that mediates monomethylation and asymmetric dimethylation of histone H4 'Arg-4' (H4R3me1 and H4R3me2a, respectively), a specific tag for epigenetic transcriptional activation (By similarity). Methylates ilf3 to regulate its DNA-binding activity (PubMed:18636753). Required for neural induction, playing a key role in the control of epidermal versus neural cell fate choice (PubMed:16214893).</text>
</comment>
<comment type="catalytic activity">
    <reaction evidence="10">
        <text>L-arginyl-[protein] + 2 S-adenosyl-L-methionine = N(omega),N(omega)-dimethyl-L-arginyl-[protein] + 2 S-adenosyl-L-homocysteine + 2 H(+)</text>
        <dbReference type="Rhea" id="RHEA:48096"/>
        <dbReference type="Rhea" id="RHEA-COMP:10532"/>
        <dbReference type="Rhea" id="RHEA-COMP:11991"/>
        <dbReference type="ChEBI" id="CHEBI:15378"/>
        <dbReference type="ChEBI" id="CHEBI:29965"/>
        <dbReference type="ChEBI" id="CHEBI:57856"/>
        <dbReference type="ChEBI" id="CHEBI:59789"/>
        <dbReference type="ChEBI" id="CHEBI:61897"/>
        <dbReference type="EC" id="2.1.1.319"/>
    </reaction>
    <physiologicalReaction direction="left-to-right" evidence="10">
        <dbReference type="Rhea" id="RHEA:48097"/>
    </physiologicalReaction>
</comment>
<comment type="catalytic activity">
    <reaction evidence="7">
        <text>L-arginyl-[protein] + S-adenosyl-L-methionine = N(omega)-methyl-L-arginyl-[protein] + S-adenosyl-L-homocysteine + H(+)</text>
        <dbReference type="Rhea" id="RHEA:48100"/>
        <dbReference type="Rhea" id="RHEA-COMP:10532"/>
        <dbReference type="Rhea" id="RHEA-COMP:11990"/>
        <dbReference type="ChEBI" id="CHEBI:15378"/>
        <dbReference type="ChEBI" id="CHEBI:29965"/>
        <dbReference type="ChEBI" id="CHEBI:57856"/>
        <dbReference type="ChEBI" id="CHEBI:59789"/>
        <dbReference type="ChEBI" id="CHEBI:65280"/>
    </reaction>
    <physiologicalReaction direction="left-to-right" evidence="10">
        <dbReference type="Rhea" id="RHEA:48101"/>
    </physiologicalReaction>
</comment>
<comment type="catalytic activity">
    <reaction evidence="10">
        <text>N(omega)-methyl-L-arginyl-[protein] + S-adenosyl-L-methionine = N(omega),N(omega)-dimethyl-L-arginyl-[protein] + S-adenosyl-L-homocysteine + H(+)</text>
        <dbReference type="Rhea" id="RHEA:48104"/>
        <dbReference type="Rhea" id="RHEA-COMP:11990"/>
        <dbReference type="Rhea" id="RHEA-COMP:11991"/>
        <dbReference type="ChEBI" id="CHEBI:15378"/>
        <dbReference type="ChEBI" id="CHEBI:57856"/>
        <dbReference type="ChEBI" id="CHEBI:59789"/>
        <dbReference type="ChEBI" id="CHEBI:61897"/>
        <dbReference type="ChEBI" id="CHEBI:65280"/>
    </reaction>
    <physiologicalReaction direction="left-to-right" evidence="10">
        <dbReference type="Rhea" id="RHEA:48105"/>
    </physiologicalReaction>
</comment>
<comment type="subunit">
    <text evidence="2 3">Homodimer. Homooctamer; individual homodimers associates to form a homooctamer and homooligomerization is required for proper localization to the cell membrane. Individual homodimers can associate to form a homohexamer (By similarity). Component of a complex with lsm14a/rap55a. Interacts with cirbp (By similarity).</text>
</comment>
<comment type="subcellular location">
    <subcellularLocation>
        <location evidence="4">Nucleus</location>
    </subcellularLocation>
    <subcellularLocation>
        <location evidence="4">Nucleus</location>
        <location evidence="4">Nucleoplasm</location>
    </subcellularLocation>
    <subcellularLocation>
        <location evidence="4">Cytoplasm</location>
        <location evidence="4">Cytosol</location>
    </subcellularLocation>
    <subcellularLocation>
        <location evidence="3">Cytoplasm</location>
    </subcellularLocation>
</comment>
<comment type="tissue specificity">
    <text evidence="6">From the onset of gastrulation, expressed in dorsal mesoderm, and in dorsal and ventral ectoderm. At the neurula and tail bud stages, expression is restricted to the neuroectoderm, with highest expression in the anterior neural plate.</text>
</comment>
<comment type="developmental stage">
    <text evidence="6">Expressed both maternally and zygotically. Expressed throughout all embryonic stages.</text>
</comment>
<comment type="induction">
    <text evidence="6">By Ca(2+).</text>
</comment>
<comment type="similarity">
    <text evidence="5">Belongs to the class I-like SAM-binding methyltransferase superfamily. Protein arginine N-methyltransferase family.</text>
</comment>
<comment type="sequence caution" evidence="9">
    <conflict type="erroneous initiation">
        <sequence resource="EMBL-CDS" id="AAH72069"/>
    </conflict>
</comment>
<comment type="sequence caution" evidence="9">
    <conflict type="erroneous initiation">
        <sequence resource="EMBL-CDS" id="AAI06276"/>
    </conflict>
</comment>
<sequence length="351" mass="40437">MAEAKTCNMEVSCALPEGSVKPNAEDMTSKDYYFDSYAHFGIHEEMLKDEVRTLTYRNSMFHNRHLFKDKVVLDVGSGTGILCMFAAKAGAKKVIGIECSSISDYAIKIVKANKLDHVVTIIKGKVEEVELPVEKVDIIISEWMGYCLFYESMLNTVIYARDKWLNPDGLIFPDRATLYVTAIEDRQYKDYKIHWWENVYGFDMSCIKDVAIKEPLVDVVDPKQLVSNACLIKEVDIYTVKVDDLTFTSPFCLQVKRNDYIHAMVAYFNIEFTRCHKRTGFSTSPESPYTHWKQTVFYMEDYLTVKTGEEIFGTISMKPNAKNNRDLDFTVDIDFKGQLCELSCSTDYRMR</sequence>
<proteinExistence type="evidence at protein level"/>
<organism>
    <name type="scientific">Xenopus laevis</name>
    <name type="common">African clawed frog</name>
    <dbReference type="NCBI Taxonomy" id="8355"/>
    <lineage>
        <taxon>Eukaryota</taxon>
        <taxon>Metazoa</taxon>
        <taxon>Chordata</taxon>
        <taxon>Craniata</taxon>
        <taxon>Vertebrata</taxon>
        <taxon>Euteleostomi</taxon>
        <taxon>Amphibia</taxon>
        <taxon>Batrachia</taxon>
        <taxon>Anura</taxon>
        <taxon>Pipoidea</taxon>
        <taxon>Pipidae</taxon>
        <taxon>Xenopodinae</taxon>
        <taxon>Xenopus</taxon>
        <taxon>Xenopus</taxon>
    </lineage>
</organism>
<keyword id="KW-0010">Activator</keyword>
<keyword id="KW-0963">Cytoplasm</keyword>
<keyword id="KW-0217">Developmental protein</keyword>
<keyword id="KW-0221">Differentiation</keyword>
<keyword id="KW-0489">Methyltransferase</keyword>
<keyword id="KW-0524">Neurogenesis</keyword>
<keyword id="KW-0539">Nucleus</keyword>
<keyword id="KW-1185">Reference proteome</keyword>
<keyword id="KW-0949">S-adenosyl-L-methionine</keyword>
<keyword id="KW-0804">Transcription</keyword>
<keyword id="KW-0805">Transcription regulation</keyword>
<keyword id="KW-0808">Transferase</keyword>
<name>ANM1B_XENLA</name>
<reference evidence="9 12" key="1">
    <citation type="journal article" date="2005" name="Proc. Natl. Acad. Sci. U.S.A.">
        <title>The Ca2+-induced methyltransferase xPRMT1b controls neural fate in amphibian embryo.</title>
        <authorList>
            <person name="Batut J."/>
            <person name="Vandel L."/>
            <person name="Leclerc C."/>
            <person name="Daguzan C."/>
            <person name="Moreau M."/>
            <person name="Neant I."/>
        </authorList>
    </citation>
    <scope>NUCLEOTIDE SEQUENCE [MRNA]</scope>
    <scope>FUNCTION</scope>
    <scope>TISSUE SPECIFICITY</scope>
    <scope>DEVELOPMENTAL STAGE</scope>
    <scope>INDUCTION</scope>
    <source>
        <tissue evidence="6">Gastrula</tissue>
    </source>
</reference>
<reference evidence="11" key="2">
    <citation type="submission" date="2005-10" db="EMBL/GenBank/DDBJ databases">
        <authorList>
            <consortium name="NIH - Xenopus Gene Collection (XGC) project"/>
        </authorList>
    </citation>
    <scope>NUCLEOTIDE SEQUENCE [LARGE SCALE MRNA]</scope>
    <source>
        <tissue evidence="11">Neurula</tissue>
    </source>
</reference>
<reference evidence="9" key="3">
    <citation type="journal article" date="2008" name="Biochemistry">
        <title>Methylation of Xilf3 by Xprmt1b alters its DNA, but not RNA, binding activity.</title>
        <authorList>
            <person name="Cazanove O."/>
            <person name="Batut J."/>
            <person name="Scarlett G."/>
            <person name="Mumford K."/>
            <person name="Elgar S."/>
            <person name="Thresh S."/>
            <person name="Neant I."/>
            <person name="Moreau M."/>
            <person name="Guille M."/>
        </authorList>
    </citation>
    <scope>FUNCTION</scope>
    <scope>CATALYTIC ACTIVITY</scope>
</reference>
<evidence type="ECO:0000250" key="1"/>
<evidence type="ECO:0000250" key="2">
    <source>
        <dbReference type="UniProtKB" id="Q8AV13"/>
    </source>
</evidence>
<evidence type="ECO:0000250" key="3">
    <source>
        <dbReference type="UniProtKB" id="Q99873"/>
    </source>
</evidence>
<evidence type="ECO:0000250" key="4">
    <source>
        <dbReference type="UniProtKB" id="Q9JIF0"/>
    </source>
</evidence>
<evidence type="ECO:0000255" key="5">
    <source>
        <dbReference type="PROSITE-ProRule" id="PRU01015"/>
    </source>
</evidence>
<evidence type="ECO:0000269" key="6">
    <source>
    </source>
</evidence>
<evidence type="ECO:0000269" key="7">
    <source>
    </source>
</evidence>
<evidence type="ECO:0000303" key="8">
    <source>
    </source>
</evidence>
<evidence type="ECO:0000305" key="9"/>
<evidence type="ECO:0000305" key="10">
    <source>
    </source>
</evidence>
<evidence type="ECO:0000312" key="11">
    <source>
        <dbReference type="EMBL" id="AAI06276.1"/>
    </source>
</evidence>
<evidence type="ECO:0000312" key="12">
    <source>
        <dbReference type="EMBL" id="AAQ65243.1"/>
    </source>
</evidence>
<dbReference type="EC" id="2.1.1.319" evidence="7"/>
<dbReference type="EMBL" id="AY330768">
    <property type="protein sequence ID" value="AAQ65243.1"/>
    <property type="molecule type" value="mRNA"/>
</dbReference>
<dbReference type="EMBL" id="BC072069">
    <property type="protein sequence ID" value="AAH72069.1"/>
    <property type="status" value="ALT_INIT"/>
    <property type="molecule type" value="mRNA"/>
</dbReference>
<dbReference type="EMBL" id="BC106275">
    <property type="protein sequence ID" value="AAI06276.1"/>
    <property type="status" value="ALT_INIT"/>
    <property type="molecule type" value="mRNA"/>
</dbReference>
<dbReference type="SMR" id="Q6VRB0"/>
<dbReference type="DNASU" id="398716"/>
<dbReference type="GeneID" id="398716"/>
<dbReference type="KEGG" id="xla:398716"/>
<dbReference type="AGR" id="Xenbase:XB-GENE-865039"/>
<dbReference type="CTD" id="398716"/>
<dbReference type="Xenbase" id="XB-GENE-865039">
    <property type="gene designation" value="prmt1.L"/>
</dbReference>
<dbReference type="OMA" id="XNIVEYA"/>
<dbReference type="OrthoDB" id="7848332at2759"/>
<dbReference type="CD-CODE" id="78E86D56">
    <property type="entry name" value="Mitochondrial cloud"/>
</dbReference>
<dbReference type="Proteomes" id="UP000186698">
    <property type="component" value="Chromosome 7L"/>
</dbReference>
<dbReference type="Bgee" id="398716">
    <property type="expression patterns" value="Expressed in gastrula and 19 other cell types or tissues"/>
</dbReference>
<dbReference type="GO" id="GO:0005737">
    <property type="term" value="C:cytoplasm"/>
    <property type="evidence" value="ECO:0000250"/>
    <property type="project" value="UniProtKB"/>
</dbReference>
<dbReference type="GO" id="GO:0005829">
    <property type="term" value="C:cytosol"/>
    <property type="evidence" value="ECO:0007669"/>
    <property type="project" value="UniProtKB-SubCell"/>
</dbReference>
<dbReference type="GO" id="GO:0005654">
    <property type="term" value="C:nucleoplasm"/>
    <property type="evidence" value="ECO:0007669"/>
    <property type="project" value="UniProtKB-SubCell"/>
</dbReference>
<dbReference type="GO" id="GO:0005634">
    <property type="term" value="C:nucleus"/>
    <property type="evidence" value="ECO:0000250"/>
    <property type="project" value="UniProtKB"/>
</dbReference>
<dbReference type="GO" id="GO:0044020">
    <property type="term" value="F:histone H4R3 methyltransferase activity"/>
    <property type="evidence" value="ECO:0000250"/>
    <property type="project" value="UniProtKB"/>
</dbReference>
<dbReference type="GO" id="GO:0042054">
    <property type="term" value="F:histone methyltransferase activity"/>
    <property type="evidence" value="ECO:0000318"/>
    <property type="project" value="GO_Central"/>
</dbReference>
<dbReference type="GO" id="GO:0042802">
    <property type="term" value="F:identical protein binding"/>
    <property type="evidence" value="ECO:0000250"/>
    <property type="project" value="UniProtKB"/>
</dbReference>
<dbReference type="GO" id="GO:0008170">
    <property type="term" value="F:N-methyltransferase activity"/>
    <property type="evidence" value="ECO:0000314"/>
    <property type="project" value="UniProtKB"/>
</dbReference>
<dbReference type="GO" id="GO:0016274">
    <property type="term" value="F:protein-arginine N-methyltransferase activity"/>
    <property type="evidence" value="ECO:0000314"/>
    <property type="project" value="UniProtKB"/>
</dbReference>
<dbReference type="GO" id="GO:0035242">
    <property type="term" value="F:protein-arginine omega-N asymmetric methyltransferase activity"/>
    <property type="evidence" value="ECO:0000318"/>
    <property type="project" value="GO_Central"/>
</dbReference>
<dbReference type="GO" id="GO:0035241">
    <property type="term" value="F:protein-arginine omega-N monomethyltransferase activity"/>
    <property type="evidence" value="ECO:0000250"/>
    <property type="project" value="UniProtKB"/>
</dbReference>
<dbReference type="GO" id="GO:1904047">
    <property type="term" value="F:S-adenosyl-L-methionine binding"/>
    <property type="evidence" value="ECO:0000250"/>
    <property type="project" value="UniProtKB"/>
</dbReference>
<dbReference type="GO" id="GO:0003713">
    <property type="term" value="F:transcription coactivator activity"/>
    <property type="evidence" value="ECO:0000314"/>
    <property type="project" value="Xenbase"/>
</dbReference>
<dbReference type="GO" id="GO:0048738">
    <property type="term" value="P:cardiac muscle tissue development"/>
    <property type="evidence" value="ECO:0000250"/>
    <property type="project" value="UniProtKB"/>
</dbReference>
<dbReference type="GO" id="GO:0008283">
    <property type="term" value="P:cell population proliferation"/>
    <property type="evidence" value="ECO:0000314"/>
    <property type="project" value="Xenbase"/>
</dbReference>
<dbReference type="GO" id="GO:0006338">
    <property type="term" value="P:chromatin remodeling"/>
    <property type="evidence" value="ECO:0000318"/>
    <property type="project" value="GO_Central"/>
</dbReference>
<dbReference type="GO" id="GO:0045653">
    <property type="term" value="P:negative regulation of megakaryocyte differentiation"/>
    <property type="evidence" value="ECO:0000250"/>
    <property type="project" value="UniProtKB"/>
</dbReference>
<dbReference type="GO" id="GO:0022008">
    <property type="term" value="P:neurogenesis"/>
    <property type="evidence" value="ECO:0000315"/>
    <property type="project" value="UniProtKB"/>
</dbReference>
<dbReference type="GO" id="GO:0018216">
    <property type="term" value="P:peptidyl-arginine methylation"/>
    <property type="evidence" value="ECO:0000314"/>
    <property type="project" value="UniProtKB"/>
</dbReference>
<dbReference type="GO" id="GO:0008284">
    <property type="term" value="P:positive regulation of cell population proliferation"/>
    <property type="evidence" value="ECO:0000250"/>
    <property type="project" value="UniProtKB"/>
</dbReference>
<dbReference type="GO" id="GO:1905168">
    <property type="term" value="P:positive regulation of double-strand break repair via homologous recombination"/>
    <property type="evidence" value="ECO:0000250"/>
    <property type="project" value="UniProtKB"/>
</dbReference>
<dbReference type="GO" id="GO:0051260">
    <property type="term" value="P:protein homooligomerization"/>
    <property type="evidence" value="ECO:0000250"/>
    <property type="project" value="UniProtKB"/>
</dbReference>
<dbReference type="GO" id="GO:0006355">
    <property type="term" value="P:regulation of DNA-templated transcription"/>
    <property type="evidence" value="ECO:0000318"/>
    <property type="project" value="GO_Central"/>
</dbReference>
<dbReference type="GO" id="GO:0045652">
    <property type="term" value="P:regulation of megakaryocyte differentiation"/>
    <property type="evidence" value="ECO:0000250"/>
    <property type="project" value="UniProtKB"/>
</dbReference>
<dbReference type="GO" id="GO:0008380">
    <property type="term" value="P:RNA splicing"/>
    <property type="evidence" value="ECO:0000250"/>
    <property type="project" value="UniProtKB"/>
</dbReference>
<dbReference type="CDD" id="cd02440">
    <property type="entry name" value="AdoMet_MTases"/>
    <property type="match status" value="1"/>
</dbReference>
<dbReference type="FunFam" id="2.70.160.11:FF:000001">
    <property type="entry name" value="Blast:Protein arginine N-methyltransferase 1"/>
    <property type="match status" value="1"/>
</dbReference>
<dbReference type="FunFam" id="3.40.50.150:FF:000003">
    <property type="entry name" value="Blast:Protein arginine N-methyltransferase 1"/>
    <property type="match status" value="1"/>
</dbReference>
<dbReference type="Gene3D" id="2.70.160.11">
    <property type="entry name" value="Hnrnp arginine n-methyltransferase1"/>
    <property type="match status" value="1"/>
</dbReference>
<dbReference type="Gene3D" id="3.40.50.150">
    <property type="entry name" value="Vaccinia Virus protein VP39"/>
    <property type="match status" value="1"/>
</dbReference>
<dbReference type="InterPro" id="IPR025799">
    <property type="entry name" value="Arg_MeTrfase"/>
</dbReference>
<dbReference type="InterPro" id="IPR041698">
    <property type="entry name" value="Methyltransf_25"/>
</dbReference>
<dbReference type="InterPro" id="IPR055135">
    <property type="entry name" value="PRMT_dom"/>
</dbReference>
<dbReference type="InterPro" id="IPR029063">
    <property type="entry name" value="SAM-dependent_MTases_sf"/>
</dbReference>
<dbReference type="PANTHER" id="PTHR11006">
    <property type="entry name" value="PROTEIN ARGININE N-METHYLTRANSFERASE"/>
    <property type="match status" value="1"/>
</dbReference>
<dbReference type="PANTHER" id="PTHR11006:SF54">
    <property type="entry name" value="PROTEIN ARGININE N-METHYLTRANSFERASE 1"/>
    <property type="match status" value="1"/>
</dbReference>
<dbReference type="Pfam" id="PF13649">
    <property type="entry name" value="Methyltransf_25"/>
    <property type="match status" value="1"/>
</dbReference>
<dbReference type="Pfam" id="PF22528">
    <property type="entry name" value="PRMT_C"/>
    <property type="match status" value="1"/>
</dbReference>
<dbReference type="SUPFAM" id="SSF53335">
    <property type="entry name" value="S-adenosyl-L-methionine-dependent methyltransferases"/>
    <property type="match status" value="1"/>
</dbReference>
<dbReference type="PROSITE" id="PS51678">
    <property type="entry name" value="SAM_MT_PRMT"/>
    <property type="match status" value="1"/>
</dbReference>
<gene>
    <name type="primary">prmt1-b</name>
    <name type="synonym">prmt1</name>
    <name evidence="8" type="synonym">prmt1b</name>
</gene>